<organism>
    <name type="scientific">Canine adenovirus serotype 1 (strain RI261)</name>
    <name type="common">CAdV-1</name>
    <name type="synonym">Canine adenovirus 1 (strain RI261)</name>
    <dbReference type="NCBI Taxonomy" id="69151"/>
    <lineage>
        <taxon>Viruses</taxon>
        <taxon>Varidnaviria</taxon>
        <taxon>Bamfordvirae</taxon>
        <taxon>Preplasmiviricota</taxon>
        <taxon>Tectiliviricetes</taxon>
        <taxon>Rowavirales</taxon>
        <taxon>Adenoviridae</taxon>
        <taxon>Mastadenovirus</taxon>
        <taxon>Canine mastadenovirus A</taxon>
    </lineage>
</organism>
<keyword id="KW-0238">DNA-binding</keyword>
<keyword id="KW-1048">Host nucleus</keyword>
<keyword id="KW-0945">Host-virus interaction</keyword>
<keyword id="KW-0426">Late protein</keyword>
<keyword id="KW-0597">Phosphoprotein</keyword>
<keyword id="KW-1163">Viral penetration into host nucleus</keyword>
<keyword id="KW-0946">Virion</keyword>
<keyword id="KW-1160">Virus entry into host cell</keyword>
<organismHost>
    <name type="scientific">Canis lupus familiaris</name>
    <name type="common">Dog</name>
    <name type="synonym">Canis familiaris</name>
    <dbReference type="NCBI Taxonomy" id="9615"/>
</organismHost>
<comment type="function">
    <text evidence="1">Plays a role in the inhibition of host immune response within the nucleus. Interacts with cellular nucleosomes and immobilizes the host immune danger signal HMGB1 on chromatin. In turn, prevents HMGB1 release out of the cell and thus decreases inflammation. Also plays a role in the wrapping and condensation of the viral DNA. May also promote viral genome import into the nucleus.</text>
</comment>
<comment type="subunit">
    <text evidence="1">Interacts with the core-capsid bridging protein; this interaction bridges the virus core to the capsid. Interacts with host NPM1; this interaction might play a role in placing the pre-histone-like nucleoprotein on the viral DNA or regulating viral gene expression. Interacts with host HMGB1; this interaction inhibits host immune response.</text>
</comment>
<comment type="subcellular location">
    <molecule>Histone-like nucleoprotein</molecule>
    <subcellularLocation>
        <location evidence="1">Virion</location>
    </subcellularLocation>
    <text evidence="1">Located inside the capsid in association with the viral DNA (core). Present in about 1070 copies per virion.</text>
</comment>
<comment type="subcellular location">
    <molecule>Pre-histone-like nucleoprotein</molecule>
    <subcellularLocation>
        <location evidence="1">Host nucleus</location>
        <location evidence="1">Host nucleolus</location>
    </subcellularLocation>
</comment>
<comment type="induction">
    <text evidence="1">Expressed in the late phase of the viral replicative cycle.</text>
</comment>
<comment type="PTM">
    <text evidence="1">Cleaved near the N-terminus by the viral protease during virion maturation to form the mature protein.</text>
</comment>
<comment type="miscellaneous">
    <text evidence="1">All late proteins expressed from the major late promoter are produced by alternative splicing and alternative polyadenylation of the same gene giving rise to non-overlapping ORFs. A leader sequence is present in the N-terminus of all these mRNAs and is recognized by the viral shutoff protein to provide expression although conventional translation via ribosome scanning from the cap has been shut off in the host cell.</text>
</comment>
<comment type="similarity">
    <text evidence="1 2">Belongs to the adenoviridae histone-like nucleoprotein family.</text>
</comment>
<comment type="sequence caution" evidence="2">
    <conflict type="erroneous initiation">
        <sequence resource="EMBL-CDS" id="CAA69062"/>
    </conflict>
    <text>Extended N-terminus.</text>
</comment>
<comment type="sequence caution" evidence="2">
    <conflict type="erroneous initiation">
        <sequence resource="EMBL-CDS" id="CAA69062"/>
    </conflict>
</comment>
<sequence>MAILISPSNNTGWGLGTHKLFGGAKQKSDQHPVYVQAHYRAPWGSKGRRRPGRARGVPLDPKTEAEVVATIDEVARNGPPAARLVLEAARRVGAYNLRRARKLTPAGRAMAAMRARQMVNQAKRRKRRVRSK</sequence>
<feature type="initiator methionine" description="Removed" evidence="1">
    <location>
        <position position="1"/>
    </location>
</feature>
<feature type="chain" id="PRO_0000439839" description="Pre-histone-like nucleoprotein" evidence="1">
    <location>
        <begin position="2"/>
        <end position="132"/>
    </location>
</feature>
<feature type="propeptide" id="PRO_0000439840" evidence="1">
    <location>
        <begin position="2"/>
        <end position="23"/>
    </location>
</feature>
<feature type="chain" id="PRO_0000036588" description="Histone-like nucleoprotein" evidence="1">
    <location>
        <begin position="24"/>
        <end position="132"/>
    </location>
</feature>
<feature type="short sequence motif" description="Nuclear localization signal" evidence="1">
    <location>
        <begin position="124"/>
        <end position="132"/>
    </location>
</feature>
<feature type="site" description="Cleavage; by viral protease" evidence="1">
    <location>
        <begin position="23"/>
        <end position="24"/>
    </location>
</feature>
<dbReference type="EMBL" id="Y07760">
    <property type="protein sequence ID" value="CAA69062.1"/>
    <property type="status" value="ALT_INIT"/>
    <property type="molecule type" value="Genomic_DNA"/>
</dbReference>
<dbReference type="PIR" id="B46116">
    <property type="entry name" value="B46116"/>
</dbReference>
<dbReference type="KEGG" id="vg:1488927"/>
<dbReference type="Proteomes" id="UP000126130">
    <property type="component" value="Segment"/>
</dbReference>
<dbReference type="GO" id="GO:0043657">
    <property type="term" value="C:host cell"/>
    <property type="evidence" value="ECO:0007669"/>
    <property type="project" value="GOC"/>
</dbReference>
<dbReference type="GO" id="GO:0044196">
    <property type="term" value="C:host cell nucleolus"/>
    <property type="evidence" value="ECO:0007669"/>
    <property type="project" value="UniProtKB-SubCell"/>
</dbReference>
<dbReference type="GO" id="GO:0019028">
    <property type="term" value="C:viral capsid"/>
    <property type="evidence" value="ECO:0007669"/>
    <property type="project" value="InterPro"/>
</dbReference>
<dbReference type="GO" id="GO:0003677">
    <property type="term" value="F:DNA binding"/>
    <property type="evidence" value="ECO:0007669"/>
    <property type="project" value="UniProtKB-UniRule"/>
</dbReference>
<dbReference type="GO" id="GO:0046718">
    <property type="term" value="P:symbiont entry into host cell"/>
    <property type="evidence" value="ECO:0007669"/>
    <property type="project" value="UniProtKB-UniRule"/>
</dbReference>
<dbReference type="GO" id="GO:0075732">
    <property type="term" value="P:viral penetration into host nucleus"/>
    <property type="evidence" value="ECO:0007669"/>
    <property type="project" value="UniProtKB-UniRule"/>
</dbReference>
<dbReference type="HAMAP" id="MF_04056">
    <property type="entry name" value="ADV_PVII"/>
    <property type="match status" value="1"/>
</dbReference>
<dbReference type="InterPro" id="IPR004912">
    <property type="entry name" value="Adeno_VII"/>
</dbReference>
<dbReference type="Pfam" id="PF03228">
    <property type="entry name" value="Adeno_VII"/>
    <property type="match status" value="1"/>
</dbReference>
<gene>
    <name evidence="1" type="primary">L2</name>
</gene>
<evidence type="ECO:0000255" key="1">
    <source>
        <dbReference type="HAMAP-Rule" id="MF_04056"/>
    </source>
</evidence>
<evidence type="ECO:0000305" key="2"/>
<name>NP_ADECR</name>
<reference key="1">
    <citation type="journal article" date="1997" name="J. Gen. Virol.">
        <title>Complete DNA sequence of canine adenovirus type 1.</title>
        <authorList>
            <person name="Morrison M.D."/>
            <person name="Onions D.E."/>
            <person name="Nicolson L."/>
        </authorList>
    </citation>
    <scope>NUCLEOTIDE SEQUENCE [LARGE SCALE GENOMIC DNA]</scope>
</reference>
<proteinExistence type="inferred from homology"/>
<accession>P68964</accession>
<accession>O39618</accession>
<accession>P35989</accession>
<protein>
    <recommendedName>
        <fullName evidence="1">Pre-histone-like nucleoprotein</fullName>
    </recommendedName>
    <alternativeName>
        <fullName evidence="1">Pre-core protein VII</fullName>
        <shortName evidence="1">pVII</shortName>
    </alternativeName>
    <component>
        <recommendedName>
            <fullName evidence="1">Histone-like nucleoprotein</fullName>
            <shortName evidence="1">NP</shortName>
        </recommendedName>
        <alternativeName>
            <fullName evidence="1">Core protein VII</fullName>
        </alternativeName>
    </component>
</protein>